<proteinExistence type="inferred from homology"/>
<gene>
    <name evidence="1" type="primary">coaX</name>
    <name type="ordered locus">PputW619_4765</name>
</gene>
<dbReference type="EC" id="2.7.1.33" evidence="1"/>
<dbReference type="EMBL" id="CP000949">
    <property type="protein sequence ID" value="ACA75241.1"/>
    <property type="molecule type" value="Genomic_DNA"/>
</dbReference>
<dbReference type="SMR" id="B1JE18"/>
<dbReference type="STRING" id="390235.PputW619_4765"/>
<dbReference type="KEGG" id="ppw:PputW619_4765"/>
<dbReference type="eggNOG" id="COG1521">
    <property type="taxonomic scope" value="Bacteria"/>
</dbReference>
<dbReference type="HOGENOM" id="CLU_066627_0_1_6"/>
<dbReference type="OrthoDB" id="9781305at2"/>
<dbReference type="UniPathway" id="UPA00241">
    <property type="reaction ID" value="UER00352"/>
</dbReference>
<dbReference type="GO" id="GO:0005737">
    <property type="term" value="C:cytoplasm"/>
    <property type="evidence" value="ECO:0007669"/>
    <property type="project" value="UniProtKB-SubCell"/>
</dbReference>
<dbReference type="GO" id="GO:0005524">
    <property type="term" value="F:ATP binding"/>
    <property type="evidence" value="ECO:0007669"/>
    <property type="project" value="UniProtKB-UniRule"/>
</dbReference>
<dbReference type="GO" id="GO:0046872">
    <property type="term" value="F:metal ion binding"/>
    <property type="evidence" value="ECO:0007669"/>
    <property type="project" value="UniProtKB-KW"/>
</dbReference>
<dbReference type="GO" id="GO:0004594">
    <property type="term" value="F:pantothenate kinase activity"/>
    <property type="evidence" value="ECO:0007669"/>
    <property type="project" value="UniProtKB-UniRule"/>
</dbReference>
<dbReference type="GO" id="GO:0015937">
    <property type="term" value="P:coenzyme A biosynthetic process"/>
    <property type="evidence" value="ECO:0007669"/>
    <property type="project" value="UniProtKB-UniRule"/>
</dbReference>
<dbReference type="CDD" id="cd24015">
    <property type="entry name" value="ASKHA_NBD_PanK-III"/>
    <property type="match status" value="1"/>
</dbReference>
<dbReference type="Gene3D" id="3.30.420.40">
    <property type="match status" value="2"/>
</dbReference>
<dbReference type="HAMAP" id="MF_01274">
    <property type="entry name" value="Pantothen_kinase_3"/>
    <property type="match status" value="1"/>
</dbReference>
<dbReference type="InterPro" id="IPR043129">
    <property type="entry name" value="ATPase_NBD"/>
</dbReference>
<dbReference type="InterPro" id="IPR004619">
    <property type="entry name" value="Type_III_PanK"/>
</dbReference>
<dbReference type="NCBIfam" id="TIGR00671">
    <property type="entry name" value="baf"/>
    <property type="match status" value="1"/>
</dbReference>
<dbReference type="NCBIfam" id="NF009857">
    <property type="entry name" value="PRK13322.1-2"/>
    <property type="match status" value="1"/>
</dbReference>
<dbReference type="NCBIfam" id="NF009859">
    <property type="entry name" value="PRK13322.1-4"/>
    <property type="match status" value="1"/>
</dbReference>
<dbReference type="PANTHER" id="PTHR34265">
    <property type="entry name" value="TYPE III PANTOTHENATE KINASE"/>
    <property type="match status" value="1"/>
</dbReference>
<dbReference type="PANTHER" id="PTHR34265:SF1">
    <property type="entry name" value="TYPE III PANTOTHENATE KINASE"/>
    <property type="match status" value="1"/>
</dbReference>
<dbReference type="Pfam" id="PF03309">
    <property type="entry name" value="Pan_kinase"/>
    <property type="match status" value="1"/>
</dbReference>
<dbReference type="SUPFAM" id="SSF53067">
    <property type="entry name" value="Actin-like ATPase domain"/>
    <property type="match status" value="2"/>
</dbReference>
<reference key="1">
    <citation type="submission" date="2008-02" db="EMBL/GenBank/DDBJ databases">
        <title>Complete sequence of Pseudomonas putida W619.</title>
        <authorList>
            <person name="Copeland A."/>
            <person name="Lucas S."/>
            <person name="Lapidus A."/>
            <person name="Barry K."/>
            <person name="Detter J.C."/>
            <person name="Glavina del Rio T."/>
            <person name="Dalin E."/>
            <person name="Tice H."/>
            <person name="Pitluck S."/>
            <person name="Chain P."/>
            <person name="Malfatti S."/>
            <person name="Shin M."/>
            <person name="Vergez L."/>
            <person name="Schmutz J."/>
            <person name="Larimer F."/>
            <person name="Land M."/>
            <person name="Hauser L."/>
            <person name="Kyrpides N."/>
            <person name="Kim E."/>
            <person name="Taghavi S."/>
            <person name="Vangronsveld D."/>
            <person name="van der Lelie D."/>
            <person name="Richardson P."/>
        </authorList>
    </citation>
    <scope>NUCLEOTIDE SEQUENCE [LARGE SCALE GENOMIC DNA]</scope>
    <source>
        <strain>W619</strain>
    </source>
</reference>
<feature type="chain" id="PRO_1000140254" description="Type III pantothenate kinase">
    <location>
        <begin position="1"/>
        <end position="249"/>
    </location>
</feature>
<feature type="active site" description="Proton acceptor" evidence="1">
    <location>
        <position position="102"/>
    </location>
</feature>
<feature type="binding site" evidence="1">
    <location>
        <begin position="6"/>
        <end position="13"/>
    </location>
    <ligand>
        <name>ATP</name>
        <dbReference type="ChEBI" id="CHEBI:30616"/>
    </ligand>
</feature>
<feature type="binding site" evidence="1">
    <location>
        <position position="93"/>
    </location>
    <ligand>
        <name>substrate</name>
    </ligand>
</feature>
<feature type="binding site" evidence="1">
    <location>
        <begin position="100"/>
        <end position="103"/>
    </location>
    <ligand>
        <name>substrate</name>
    </ligand>
</feature>
<feature type="binding site" evidence="1">
    <location>
        <position position="122"/>
    </location>
    <ligand>
        <name>K(+)</name>
        <dbReference type="ChEBI" id="CHEBI:29103"/>
    </ligand>
</feature>
<feature type="binding site" evidence="1">
    <location>
        <position position="125"/>
    </location>
    <ligand>
        <name>ATP</name>
        <dbReference type="ChEBI" id="CHEBI:30616"/>
    </ligand>
</feature>
<feature type="binding site" evidence="1">
    <location>
        <position position="181"/>
    </location>
    <ligand>
        <name>substrate</name>
    </ligand>
</feature>
<sequence length="249" mass="26605">MILELDCGNSFIKWRVIQAVDATIVGGGIVDSDQALVAEVGTLASLRLSGCRIVSVRSEEETAALCTLIGQAFSVVPRVAEPAREMAGVRNGYEDFQRLGMDRWLAALGAFHLAKGACLVIDLGTAAKADFIGADGEHLGGYICPGMPLMRSQLRTHTRRIRYDDASAERALTSLAPGRSTVEAVERGCVLMLQGFARTQLEQARSLWGEAFTVFLTGGDAPLVREAAPQARVVPDLVFVGLAMACPLN</sequence>
<evidence type="ECO:0000255" key="1">
    <source>
        <dbReference type="HAMAP-Rule" id="MF_01274"/>
    </source>
</evidence>
<comment type="function">
    <text evidence="1">Catalyzes the phosphorylation of pantothenate (Pan), the first step in CoA biosynthesis.</text>
</comment>
<comment type="catalytic activity">
    <reaction evidence="1">
        <text>(R)-pantothenate + ATP = (R)-4'-phosphopantothenate + ADP + H(+)</text>
        <dbReference type="Rhea" id="RHEA:16373"/>
        <dbReference type="ChEBI" id="CHEBI:10986"/>
        <dbReference type="ChEBI" id="CHEBI:15378"/>
        <dbReference type="ChEBI" id="CHEBI:29032"/>
        <dbReference type="ChEBI" id="CHEBI:30616"/>
        <dbReference type="ChEBI" id="CHEBI:456216"/>
        <dbReference type="EC" id="2.7.1.33"/>
    </reaction>
</comment>
<comment type="cofactor">
    <cofactor evidence="1">
        <name>NH4(+)</name>
        <dbReference type="ChEBI" id="CHEBI:28938"/>
    </cofactor>
    <cofactor evidence="1">
        <name>K(+)</name>
        <dbReference type="ChEBI" id="CHEBI:29103"/>
    </cofactor>
    <text evidence="1">A monovalent cation. Ammonium or potassium.</text>
</comment>
<comment type="pathway">
    <text evidence="1">Cofactor biosynthesis; coenzyme A biosynthesis; CoA from (R)-pantothenate: step 1/5.</text>
</comment>
<comment type="subunit">
    <text evidence="1">Homodimer.</text>
</comment>
<comment type="subcellular location">
    <subcellularLocation>
        <location evidence="1">Cytoplasm</location>
    </subcellularLocation>
</comment>
<comment type="similarity">
    <text evidence="1">Belongs to the type III pantothenate kinase family.</text>
</comment>
<organism>
    <name type="scientific">Pseudomonas putida (strain W619)</name>
    <dbReference type="NCBI Taxonomy" id="390235"/>
    <lineage>
        <taxon>Bacteria</taxon>
        <taxon>Pseudomonadati</taxon>
        <taxon>Pseudomonadota</taxon>
        <taxon>Gammaproteobacteria</taxon>
        <taxon>Pseudomonadales</taxon>
        <taxon>Pseudomonadaceae</taxon>
        <taxon>Pseudomonas</taxon>
    </lineage>
</organism>
<protein>
    <recommendedName>
        <fullName evidence="1">Type III pantothenate kinase</fullName>
        <ecNumber evidence="1">2.7.1.33</ecNumber>
    </recommendedName>
    <alternativeName>
        <fullName evidence="1">PanK-III</fullName>
    </alternativeName>
    <alternativeName>
        <fullName evidence="1">Pantothenic acid kinase</fullName>
    </alternativeName>
</protein>
<keyword id="KW-0067">ATP-binding</keyword>
<keyword id="KW-0173">Coenzyme A biosynthesis</keyword>
<keyword id="KW-0963">Cytoplasm</keyword>
<keyword id="KW-0418">Kinase</keyword>
<keyword id="KW-0479">Metal-binding</keyword>
<keyword id="KW-0547">Nucleotide-binding</keyword>
<keyword id="KW-0630">Potassium</keyword>
<keyword id="KW-0808">Transferase</keyword>
<accession>B1JE18</accession>
<name>COAX_PSEPW</name>